<reference key="1">
    <citation type="journal article" date="2011" name="MBio">
        <title>Novel metabolic attributes of the genus Cyanothece, comprising a group of unicellular nitrogen-fixing Cyanobacteria.</title>
        <authorList>
            <person name="Bandyopadhyay A."/>
            <person name="Elvitigala T."/>
            <person name="Welsh E."/>
            <person name="Stockel J."/>
            <person name="Liberton M."/>
            <person name="Min H."/>
            <person name="Sherman L.A."/>
            <person name="Pakrasi H.B."/>
        </authorList>
    </citation>
    <scope>NUCLEOTIDE SEQUENCE [LARGE SCALE GENOMIC DNA]</scope>
    <source>
        <strain>PCC 7424</strain>
    </source>
</reference>
<gene>
    <name evidence="1" type="primary">hisS</name>
    <name type="ordered locus">PCC7424_5012</name>
</gene>
<organism>
    <name type="scientific">Gloeothece citriformis (strain PCC 7424)</name>
    <name type="common">Cyanothece sp. (strain PCC 7424)</name>
    <dbReference type="NCBI Taxonomy" id="65393"/>
    <lineage>
        <taxon>Bacteria</taxon>
        <taxon>Bacillati</taxon>
        <taxon>Cyanobacteriota</taxon>
        <taxon>Cyanophyceae</taxon>
        <taxon>Oscillatoriophycideae</taxon>
        <taxon>Chroococcales</taxon>
        <taxon>Aphanothecaceae</taxon>
        <taxon>Gloeothece</taxon>
        <taxon>Gloeothece citriformis</taxon>
    </lineage>
</organism>
<accession>B7KFP0</accession>
<keyword id="KW-0030">Aminoacyl-tRNA synthetase</keyword>
<keyword id="KW-0067">ATP-binding</keyword>
<keyword id="KW-0963">Cytoplasm</keyword>
<keyword id="KW-0436">Ligase</keyword>
<keyword id="KW-0547">Nucleotide-binding</keyword>
<keyword id="KW-0648">Protein biosynthesis</keyword>
<keyword id="KW-1185">Reference proteome</keyword>
<sequence length="430" mass="48509">MGAIQALRGTRDILPHEVGYWQQVERVAAEILSRALYLEIRPPIFEQTALFERGIGEGTDVVGKEMYTFKDRGDRSITLRPEGTAGVVRSFIEHNLYATGGVQRLWYTGPMFRYERPQAGRQRQFHQIGLELLGSGDYRADVEVIALATDILQTLGLKNLKLDLNSVGNREDRQNYRQALVDYLTPYKAQLDPDSQDRLERNPLRILDSKDERTKIICQDAPSILEYLGTESKRHFEQVQQLLGDLNIKYQLNPCLVRGLDYYTHTAFEIQSDDLGAQATVCGGGRYDGLVVELGGPATPAVGWAIGMERLILLLQQLQSTPTLTPDIYIVSRGEKAESQGLILAQKLRHWGLSVELDLSGSAFGKQFKRADRTGAIACLILGDQEAENQTVQLKWMTSSQQQTLTQVELLSQLEELKQSFDRHRQSRDD</sequence>
<feature type="chain" id="PRO_1000199122" description="Histidine--tRNA ligase">
    <location>
        <begin position="1"/>
        <end position="430"/>
    </location>
</feature>
<evidence type="ECO:0000255" key="1">
    <source>
        <dbReference type="HAMAP-Rule" id="MF_00127"/>
    </source>
</evidence>
<proteinExistence type="inferred from homology"/>
<protein>
    <recommendedName>
        <fullName evidence="1">Histidine--tRNA ligase</fullName>
        <ecNumber evidence="1">6.1.1.21</ecNumber>
    </recommendedName>
    <alternativeName>
        <fullName evidence="1">Histidyl-tRNA synthetase</fullName>
        <shortName evidence="1">HisRS</shortName>
    </alternativeName>
</protein>
<comment type="catalytic activity">
    <reaction evidence="1">
        <text>tRNA(His) + L-histidine + ATP = L-histidyl-tRNA(His) + AMP + diphosphate + H(+)</text>
        <dbReference type="Rhea" id="RHEA:17313"/>
        <dbReference type="Rhea" id="RHEA-COMP:9665"/>
        <dbReference type="Rhea" id="RHEA-COMP:9689"/>
        <dbReference type="ChEBI" id="CHEBI:15378"/>
        <dbReference type="ChEBI" id="CHEBI:30616"/>
        <dbReference type="ChEBI" id="CHEBI:33019"/>
        <dbReference type="ChEBI" id="CHEBI:57595"/>
        <dbReference type="ChEBI" id="CHEBI:78442"/>
        <dbReference type="ChEBI" id="CHEBI:78527"/>
        <dbReference type="ChEBI" id="CHEBI:456215"/>
        <dbReference type="EC" id="6.1.1.21"/>
    </reaction>
</comment>
<comment type="subunit">
    <text evidence="1">Homodimer.</text>
</comment>
<comment type="subcellular location">
    <subcellularLocation>
        <location evidence="1">Cytoplasm</location>
    </subcellularLocation>
</comment>
<comment type="similarity">
    <text evidence="1">Belongs to the class-II aminoacyl-tRNA synthetase family.</text>
</comment>
<dbReference type="EC" id="6.1.1.21" evidence="1"/>
<dbReference type="EMBL" id="CP001291">
    <property type="protein sequence ID" value="ACK73365.1"/>
    <property type="molecule type" value="Genomic_DNA"/>
</dbReference>
<dbReference type="RefSeq" id="WP_015956945.1">
    <property type="nucleotide sequence ID" value="NC_011729.1"/>
</dbReference>
<dbReference type="SMR" id="B7KFP0"/>
<dbReference type="STRING" id="65393.PCC7424_5012"/>
<dbReference type="KEGG" id="cyc:PCC7424_5012"/>
<dbReference type="eggNOG" id="COG0124">
    <property type="taxonomic scope" value="Bacteria"/>
</dbReference>
<dbReference type="HOGENOM" id="CLU_025113_1_1_3"/>
<dbReference type="OrthoDB" id="9800814at2"/>
<dbReference type="Proteomes" id="UP000002384">
    <property type="component" value="Chromosome"/>
</dbReference>
<dbReference type="GO" id="GO:0005737">
    <property type="term" value="C:cytoplasm"/>
    <property type="evidence" value="ECO:0007669"/>
    <property type="project" value="UniProtKB-SubCell"/>
</dbReference>
<dbReference type="GO" id="GO:0005524">
    <property type="term" value="F:ATP binding"/>
    <property type="evidence" value="ECO:0007669"/>
    <property type="project" value="UniProtKB-UniRule"/>
</dbReference>
<dbReference type="GO" id="GO:0004821">
    <property type="term" value="F:histidine-tRNA ligase activity"/>
    <property type="evidence" value="ECO:0007669"/>
    <property type="project" value="UniProtKB-UniRule"/>
</dbReference>
<dbReference type="GO" id="GO:0006427">
    <property type="term" value="P:histidyl-tRNA aminoacylation"/>
    <property type="evidence" value="ECO:0007669"/>
    <property type="project" value="UniProtKB-UniRule"/>
</dbReference>
<dbReference type="CDD" id="cd00773">
    <property type="entry name" value="HisRS-like_core"/>
    <property type="match status" value="1"/>
</dbReference>
<dbReference type="CDD" id="cd00859">
    <property type="entry name" value="HisRS_anticodon"/>
    <property type="match status" value="1"/>
</dbReference>
<dbReference type="FunFam" id="3.30.930.10:FF:000005">
    <property type="entry name" value="Histidine--tRNA ligase"/>
    <property type="match status" value="1"/>
</dbReference>
<dbReference type="Gene3D" id="3.40.50.800">
    <property type="entry name" value="Anticodon-binding domain"/>
    <property type="match status" value="1"/>
</dbReference>
<dbReference type="Gene3D" id="3.30.930.10">
    <property type="entry name" value="Bira Bifunctional Protein, Domain 2"/>
    <property type="match status" value="1"/>
</dbReference>
<dbReference type="HAMAP" id="MF_00127">
    <property type="entry name" value="His_tRNA_synth"/>
    <property type="match status" value="1"/>
</dbReference>
<dbReference type="InterPro" id="IPR006195">
    <property type="entry name" value="aa-tRNA-synth_II"/>
</dbReference>
<dbReference type="InterPro" id="IPR045864">
    <property type="entry name" value="aa-tRNA-synth_II/BPL/LPL"/>
</dbReference>
<dbReference type="InterPro" id="IPR004154">
    <property type="entry name" value="Anticodon-bd"/>
</dbReference>
<dbReference type="InterPro" id="IPR036621">
    <property type="entry name" value="Anticodon-bd_dom_sf"/>
</dbReference>
<dbReference type="InterPro" id="IPR015807">
    <property type="entry name" value="His-tRNA-ligase"/>
</dbReference>
<dbReference type="InterPro" id="IPR041715">
    <property type="entry name" value="HisRS-like_core"/>
</dbReference>
<dbReference type="InterPro" id="IPR004516">
    <property type="entry name" value="HisRS/HisZ"/>
</dbReference>
<dbReference type="InterPro" id="IPR033656">
    <property type="entry name" value="HisRS_anticodon"/>
</dbReference>
<dbReference type="NCBIfam" id="TIGR00442">
    <property type="entry name" value="hisS"/>
    <property type="match status" value="1"/>
</dbReference>
<dbReference type="PANTHER" id="PTHR43707:SF1">
    <property type="entry name" value="HISTIDINE--TRNA LIGASE, MITOCHONDRIAL-RELATED"/>
    <property type="match status" value="1"/>
</dbReference>
<dbReference type="PANTHER" id="PTHR43707">
    <property type="entry name" value="HISTIDYL-TRNA SYNTHETASE"/>
    <property type="match status" value="1"/>
</dbReference>
<dbReference type="Pfam" id="PF03129">
    <property type="entry name" value="HGTP_anticodon"/>
    <property type="match status" value="1"/>
</dbReference>
<dbReference type="Pfam" id="PF13393">
    <property type="entry name" value="tRNA-synt_His"/>
    <property type="match status" value="1"/>
</dbReference>
<dbReference type="PIRSF" id="PIRSF001549">
    <property type="entry name" value="His-tRNA_synth"/>
    <property type="match status" value="1"/>
</dbReference>
<dbReference type="SUPFAM" id="SSF52954">
    <property type="entry name" value="Class II aaRS ABD-related"/>
    <property type="match status" value="1"/>
</dbReference>
<dbReference type="SUPFAM" id="SSF55681">
    <property type="entry name" value="Class II aaRS and biotin synthetases"/>
    <property type="match status" value="1"/>
</dbReference>
<dbReference type="PROSITE" id="PS50862">
    <property type="entry name" value="AA_TRNA_LIGASE_II"/>
    <property type="match status" value="1"/>
</dbReference>
<name>SYH_GLOC7</name>